<dbReference type="EMBL" id="CP000247">
    <property type="protein sequence ID" value="ABG69861.1"/>
    <property type="molecule type" value="Genomic_DNA"/>
</dbReference>
<dbReference type="RefSeq" id="WP_001057837.1">
    <property type="nucleotide sequence ID" value="NC_008253.1"/>
</dbReference>
<dbReference type="SMR" id="Q0TGR8"/>
<dbReference type="KEGG" id="ecp:ECP_1860"/>
<dbReference type="HOGENOM" id="CLU_155793_1_1_6"/>
<dbReference type="Proteomes" id="UP000009182">
    <property type="component" value="Chromosome"/>
</dbReference>
<dbReference type="GO" id="GO:0005829">
    <property type="term" value="C:cytosol"/>
    <property type="evidence" value="ECO:0007669"/>
    <property type="project" value="UniProtKB-SubCell"/>
</dbReference>
<dbReference type="GO" id="GO:0044781">
    <property type="term" value="P:bacterial-type flagellum organization"/>
    <property type="evidence" value="ECO:0007669"/>
    <property type="project" value="UniProtKB-KW"/>
</dbReference>
<dbReference type="GO" id="GO:1902209">
    <property type="term" value="P:negative regulation of bacterial-type flagellum assembly"/>
    <property type="evidence" value="ECO:0007669"/>
    <property type="project" value="UniProtKB-UniRule"/>
</dbReference>
<dbReference type="GO" id="GO:0006457">
    <property type="term" value="P:protein folding"/>
    <property type="evidence" value="ECO:0007669"/>
    <property type="project" value="UniProtKB-UniRule"/>
</dbReference>
<dbReference type="Gene3D" id="1.20.58.380">
    <property type="entry name" value="Flagellar protein flit"/>
    <property type="match status" value="1"/>
</dbReference>
<dbReference type="HAMAP" id="MF_01180">
    <property type="entry name" value="FliT"/>
    <property type="match status" value="1"/>
</dbReference>
<dbReference type="InterPro" id="IPR008622">
    <property type="entry name" value="FliT"/>
</dbReference>
<dbReference type="NCBIfam" id="NF007836">
    <property type="entry name" value="PRK10548.1"/>
    <property type="match status" value="1"/>
</dbReference>
<dbReference type="Pfam" id="PF05400">
    <property type="entry name" value="FliT"/>
    <property type="match status" value="1"/>
</dbReference>
<accession>Q0TGR8</accession>
<protein>
    <recommendedName>
        <fullName evidence="1">Flagellar protein FliT</fullName>
    </recommendedName>
</protein>
<evidence type="ECO:0000255" key="1">
    <source>
        <dbReference type="HAMAP-Rule" id="MF_01180"/>
    </source>
</evidence>
<proteinExistence type="inferred from homology"/>
<gene>
    <name evidence="1" type="primary">fliT</name>
    <name type="ordered locus">ECP_1860</name>
</gene>
<reference key="1">
    <citation type="journal article" date="2006" name="Mol. Microbiol.">
        <title>Role of pathogenicity island-associated integrases in the genome plasticity of uropathogenic Escherichia coli strain 536.</title>
        <authorList>
            <person name="Hochhut B."/>
            <person name="Wilde C."/>
            <person name="Balling G."/>
            <person name="Middendorf B."/>
            <person name="Dobrindt U."/>
            <person name="Brzuszkiewicz E."/>
            <person name="Gottschalk G."/>
            <person name="Carniel E."/>
            <person name="Hacker J."/>
        </authorList>
    </citation>
    <scope>NUCLEOTIDE SEQUENCE [LARGE SCALE GENOMIC DNA]</scope>
    <source>
        <strain>536 / UPEC</strain>
    </source>
</reference>
<name>FLIT_ECOL5</name>
<feature type="chain" id="PRO_0000353884" description="Flagellar protein FliT">
    <location>
        <begin position="1"/>
        <end position="121"/>
    </location>
</feature>
<feature type="region of interest" description="Required for homodimerization" evidence="1">
    <location>
        <begin position="1"/>
        <end position="50"/>
    </location>
</feature>
<feature type="region of interest" description="FliD binding" evidence="1">
    <location>
        <begin position="60"/>
        <end position="98"/>
    </location>
</feature>
<sequence length="121" mass="13719">MNNAPHLYFAWQQLVEKSQLMLRLATEEQWDELIASEMAYVNAVQEIAHLTEEVAPSTTMQEQLRPMLLLILDNESKVKQLLQIRMDELAKLVGQSSVQKSVLSAYGDQGGFVLAPQDNLF</sequence>
<keyword id="KW-1005">Bacterial flagellum biogenesis</keyword>
<keyword id="KW-0143">Chaperone</keyword>
<keyword id="KW-0963">Cytoplasm</keyword>
<keyword id="KW-0678">Repressor</keyword>
<keyword id="KW-0804">Transcription</keyword>
<keyword id="KW-0805">Transcription regulation</keyword>
<comment type="function">
    <text evidence="1">Dual-function protein that regulates the transcription of class 2 flagellar operons and that also acts as an export chaperone for the filament-capping protein FliD. As a transcriptional regulator, acts as an anti-FlhDC factor; it directly binds FlhC, thus inhibiting the binding of the FlhC/FlhD complex to class 2 promoters, resulting in decreased expression of class 2 flagellar operons. As a chaperone, effects FliD transition to the membrane by preventing its premature polymerization, and by directing it to the export apparatus.</text>
</comment>
<comment type="subunit">
    <text evidence="1">Homodimer. Interacts with FliD and FlhC.</text>
</comment>
<comment type="subcellular location">
    <subcellularLocation>
        <location evidence="1">Cytoplasm</location>
        <location evidence="1">Cytosol</location>
    </subcellularLocation>
</comment>
<comment type="similarity">
    <text evidence="1">Belongs to the FliT family.</text>
</comment>
<organism>
    <name type="scientific">Escherichia coli O6:K15:H31 (strain 536 / UPEC)</name>
    <dbReference type="NCBI Taxonomy" id="362663"/>
    <lineage>
        <taxon>Bacteria</taxon>
        <taxon>Pseudomonadati</taxon>
        <taxon>Pseudomonadota</taxon>
        <taxon>Gammaproteobacteria</taxon>
        <taxon>Enterobacterales</taxon>
        <taxon>Enterobacteriaceae</taxon>
        <taxon>Escherichia</taxon>
    </lineage>
</organism>